<evidence type="ECO:0000250" key="1"/>
<evidence type="ECO:0000255" key="2">
    <source>
        <dbReference type="PROSITE-ProRule" id="PRU01083"/>
    </source>
</evidence>
<evidence type="ECO:0000305" key="3"/>
<reference key="1">
    <citation type="journal article" date="1995" name="Science">
        <title>The minimal gene complement of Mycoplasma genitalium.</title>
        <authorList>
            <person name="Fraser C.M."/>
            <person name="Gocayne J.D."/>
            <person name="White O."/>
            <person name="Adams M.D."/>
            <person name="Clayton R.A."/>
            <person name="Fleischmann R.D."/>
            <person name="Bult C.J."/>
            <person name="Kerlavage A.R."/>
            <person name="Sutton G.G."/>
            <person name="Kelley J.M."/>
            <person name="Fritchman J.L."/>
            <person name="Weidman J.F."/>
            <person name="Small K.V."/>
            <person name="Sandusky M."/>
            <person name="Fuhrmann J.L."/>
            <person name="Nguyen D.T."/>
            <person name="Utterback T.R."/>
            <person name="Saudek D.M."/>
            <person name="Phillips C.A."/>
            <person name="Merrick J.M."/>
            <person name="Tomb J.-F."/>
            <person name="Dougherty B.A."/>
            <person name="Bott K.F."/>
            <person name="Hu P.-C."/>
            <person name="Lucier T.S."/>
            <person name="Peterson S.N."/>
            <person name="Smith H.O."/>
            <person name="Hutchison C.A. III"/>
            <person name="Venter J.C."/>
        </authorList>
    </citation>
    <scope>NUCLEOTIDE SEQUENCE [LARGE SCALE GENOMIC DNA]</scope>
    <source>
        <strain>ATCC 33530 / DSM 19775 / NCTC 10195 / G37</strain>
    </source>
</reference>
<reference key="2">
    <citation type="journal article" date="1993" name="J. Bacteriol.">
        <title>A survey of the Mycoplasma genitalium genome by using random sequencing.</title>
        <authorList>
            <person name="Peterson S.N."/>
            <person name="Hu P.-C."/>
            <person name="Bott K.F."/>
            <person name="Hutchison C.A. III"/>
        </authorList>
    </citation>
    <scope>NUCLEOTIDE SEQUENCE [GENOMIC DNA] OF 108-130</scope>
    <source>
        <strain>ATCC 33530 / DSM 19775 / NCTC 10195 / G37</strain>
    </source>
</reference>
<comment type="function">
    <text evidence="1">This enzyme scavenges exogenous and endogenous cytidine and 2'-deoxycytidine for UMP synthesis.</text>
</comment>
<comment type="catalytic activity">
    <reaction>
        <text>cytidine + H2O + H(+) = uridine + NH4(+)</text>
        <dbReference type="Rhea" id="RHEA:16069"/>
        <dbReference type="ChEBI" id="CHEBI:15377"/>
        <dbReference type="ChEBI" id="CHEBI:15378"/>
        <dbReference type="ChEBI" id="CHEBI:16704"/>
        <dbReference type="ChEBI" id="CHEBI:17562"/>
        <dbReference type="ChEBI" id="CHEBI:28938"/>
        <dbReference type="EC" id="3.5.4.5"/>
    </reaction>
</comment>
<comment type="catalytic activity">
    <reaction>
        <text>2'-deoxycytidine + H2O + H(+) = 2'-deoxyuridine + NH4(+)</text>
        <dbReference type="Rhea" id="RHEA:13433"/>
        <dbReference type="ChEBI" id="CHEBI:15377"/>
        <dbReference type="ChEBI" id="CHEBI:15378"/>
        <dbReference type="ChEBI" id="CHEBI:15698"/>
        <dbReference type="ChEBI" id="CHEBI:16450"/>
        <dbReference type="ChEBI" id="CHEBI:28938"/>
        <dbReference type="EC" id="3.5.4.5"/>
    </reaction>
</comment>
<comment type="cofactor">
    <cofactor evidence="1">
        <name>Zn(2+)</name>
        <dbReference type="ChEBI" id="CHEBI:29105"/>
    </cofactor>
    <text evidence="1">Binds 1 zinc ion.</text>
</comment>
<comment type="subunit">
    <text evidence="1">Homodimer.</text>
</comment>
<comment type="similarity">
    <text evidence="3">Belongs to the cytidine and deoxycytidylate deaminase family.</text>
</comment>
<proteinExistence type="inferred from homology"/>
<accession>P47298</accession>
<dbReference type="EC" id="3.5.4.5"/>
<dbReference type="EMBL" id="L43967">
    <property type="protein sequence ID" value="AAC71268.1"/>
    <property type="molecule type" value="Genomic_DNA"/>
</dbReference>
<dbReference type="EMBL" id="U02108">
    <property type="protein sequence ID" value="AAD12378.1"/>
    <property type="molecule type" value="Genomic_DNA"/>
</dbReference>
<dbReference type="PIR" id="G64205">
    <property type="entry name" value="G64205"/>
</dbReference>
<dbReference type="RefSeq" id="WP_010869308.1">
    <property type="nucleotide sequence ID" value="NC_000908.2"/>
</dbReference>
<dbReference type="SMR" id="P47298"/>
<dbReference type="FunCoup" id="P47298">
    <property type="interactions" value="50"/>
</dbReference>
<dbReference type="STRING" id="243273.MG_052"/>
<dbReference type="GeneID" id="88282168"/>
<dbReference type="KEGG" id="mge:MG_052"/>
<dbReference type="eggNOG" id="COG0295">
    <property type="taxonomic scope" value="Bacteria"/>
</dbReference>
<dbReference type="HOGENOM" id="CLU_097262_1_2_14"/>
<dbReference type="InParanoid" id="P47298"/>
<dbReference type="OrthoDB" id="9795347at2"/>
<dbReference type="BioCyc" id="MGEN243273:G1GJ2-53-MONOMER"/>
<dbReference type="Proteomes" id="UP000000807">
    <property type="component" value="Chromosome"/>
</dbReference>
<dbReference type="GO" id="GO:0005829">
    <property type="term" value="C:cytosol"/>
    <property type="evidence" value="ECO:0000318"/>
    <property type="project" value="GO_Central"/>
</dbReference>
<dbReference type="GO" id="GO:0004126">
    <property type="term" value="F:cytidine deaminase activity"/>
    <property type="evidence" value="ECO:0000318"/>
    <property type="project" value="GO_Central"/>
</dbReference>
<dbReference type="GO" id="GO:0042802">
    <property type="term" value="F:identical protein binding"/>
    <property type="evidence" value="ECO:0007669"/>
    <property type="project" value="UniProtKB-ARBA"/>
</dbReference>
<dbReference type="GO" id="GO:0008270">
    <property type="term" value="F:zinc ion binding"/>
    <property type="evidence" value="ECO:0000318"/>
    <property type="project" value="GO_Central"/>
</dbReference>
<dbReference type="GO" id="GO:0009972">
    <property type="term" value="P:cytidine deamination"/>
    <property type="evidence" value="ECO:0000318"/>
    <property type="project" value="GO_Central"/>
</dbReference>
<dbReference type="CDD" id="cd01283">
    <property type="entry name" value="cytidine_deaminase"/>
    <property type="match status" value="1"/>
</dbReference>
<dbReference type="Gene3D" id="3.40.140.10">
    <property type="entry name" value="Cytidine Deaminase, domain 2"/>
    <property type="match status" value="1"/>
</dbReference>
<dbReference type="InterPro" id="IPR016192">
    <property type="entry name" value="APOBEC/CMP_deaminase_Zn-bd"/>
</dbReference>
<dbReference type="InterPro" id="IPR002125">
    <property type="entry name" value="CMP_dCMP_dom"/>
</dbReference>
<dbReference type="InterPro" id="IPR050202">
    <property type="entry name" value="Cyt/Deoxycyt_deaminase"/>
</dbReference>
<dbReference type="InterPro" id="IPR006262">
    <property type="entry name" value="Cyt_deam_tetra"/>
</dbReference>
<dbReference type="InterPro" id="IPR016193">
    <property type="entry name" value="Cytidine_deaminase-like"/>
</dbReference>
<dbReference type="NCBIfam" id="TIGR01354">
    <property type="entry name" value="cyt_deam_tetra"/>
    <property type="match status" value="1"/>
</dbReference>
<dbReference type="NCBIfam" id="NF004064">
    <property type="entry name" value="PRK05578.1"/>
    <property type="match status" value="1"/>
</dbReference>
<dbReference type="PANTHER" id="PTHR11644">
    <property type="entry name" value="CYTIDINE DEAMINASE"/>
    <property type="match status" value="1"/>
</dbReference>
<dbReference type="PANTHER" id="PTHR11644:SF2">
    <property type="entry name" value="CYTIDINE DEAMINASE"/>
    <property type="match status" value="1"/>
</dbReference>
<dbReference type="Pfam" id="PF00383">
    <property type="entry name" value="dCMP_cyt_deam_1"/>
    <property type="match status" value="1"/>
</dbReference>
<dbReference type="SUPFAM" id="SSF53927">
    <property type="entry name" value="Cytidine deaminase-like"/>
    <property type="match status" value="1"/>
</dbReference>
<dbReference type="PROSITE" id="PS00903">
    <property type="entry name" value="CYT_DCMP_DEAMINASES_1"/>
    <property type="match status" value="1"/>
</dbReference>
<dbReference type="PROSITE" id="PS51747">
    <property type="entry name" value="CYT_DCMP_DEAMINASES_2"/>
    <property type="match status" value="1"/>
</dbReference>
<protein>
    <recommendedName>
        <fullName>Cytidine deaminase</fullName>
        <shortName>CDA</shortName>
        <ecNumber>3.5.4.5</ecNumber>
    </recommendedName>
    <alternativeName>
        <fullName>Cytidine aminohydrolase</fullName>
    </alternativeName>
</protein>
<name>CDD_MYCGE</name>
<gene>
    <name type="primary">cdd</name>
    <name type="ordered locus">MG052</name>
</gene>
<organism>
    <name type="scientific">Mycoplasma genitalium (strain ATCC 33530 / DSM 19775 / NCTC 10195 / G37)</name>
    <name type="common">Mycoplasmoides genitalium</name>
    <dbReference type="NCBI Taxonomy" id="243273"/>
    <lineage>
        <taxon>Bacteria</taxon>
        <taxon>Bacillati</taxon>
        <taxon>Mycoplasmatota</taxon>
        <taxon>Mycoplasmoidales</taxon>
        <taxon>Mycoplasmoidaceae</taxon>
        <taxon>Mycoplasmoides</taxon>
    </lineage>
</organism>
<feature type="chain" id="PRO_0000171679" description="Cytidine deaminase">
    <location>
        <begin position="1"/>
        <end position="130"/>
    </location>
</feature>
<feature type="domain" description="CMP/dCMP-type deaminase" evidence="2">
    <location>
        <begin position="3"/>
        <end position="130"/>
    </location>
</feature>
<feature type="active site" description="Proton donor" evidence="1">
    <location>
        <position position="56"/>
    </location>
</feature>
<feature type="binding site" evidence="1">
    <location>
        <begin position="43"/>
        <end position="45"/>
    </location>
    <ligand>
        <name>substrate</name>
    </ligand>
</feature>
<feature type="binding site" evidence="1">
    <location>
        <position position="54"/>
    </location>
    <ligand>
        <name>Zn(2+)</name>
        <dbReference type="ChEBI" id="CHEBI:29105"/>
        <note>catalytic</note>
    </ligand>
</feature>
<feature type="binding site" evidence="1">
    <location>
        <position position="88"/>
    </location>
    <ligand>
        <name>Zn(2+)</name>
        <dbReference type="ChEBI" id="CHEBI:29105"/>
        <note>catalytic</note>
    </ligand>
</feature>
<feature type="binding site" evidence="1">
    <location>
        <position position="91"/>
    </location>
    <ligand>
        <name>Zn(2+)</name>
        <dbReference type="ChEBI" id="CHEBI:29105"/>
        <note>catalytic</note>
    </ligand>
</feature>
<sequence length="130" mass="14974">MKVNLEWIIKQLQMIVKRAYTPFSNFKVACMIIANNQTFFGVNIENSSFPVTLCAERSAIASMVTSGHRKIDYVFVYFNTKNKSNSPCGMCRQNLLEFSHQKTKLFCIDNDSSYKQFSIDELLMNGFKKS</sequence>
<keyword id="KW-0378">Hydrolase</keyword>
<keyword id="KW-0479">Metal-binding</keyword>
<keyword id="KW-1185">Reference proteome</keyword>
<keyword id="KW-0862">Zinc</keyword>